<protein>
    <recommendedName>
        <fullName evidence="7">Precursor of CEP15</fullName>
        <shortName evidence="7">PCEP15</shortName>
    </recommendedName>
    <component>
        <recommendedName>
            <fullName evidence="7">C-terminally encoded peptide 15</fullName>
            <shortName evidence="7">CEP15</shortName>
        </recommendedName>
    </component>
</protein>
<gene>
    <name evidence="7" type="primary">CEP15</name>
    <name evidence="9" type="ordered locus">At2g40530</name>
    <name evidence="10" type="ORF">T2P4.12</name>
</gene>
<reference key="1">
    <citation type="journal article" date="1999" name="Nature">
        <title>Sequence and analysis of chromosome 2 of the plant Arabidopsis thaliana.</title>
        <authorList>
            <person name="Lin X."/>
            <person name="Kaul S."/>
            <person name="Rounsley S.D."/>
            <person name="Shea T.P."/>
            <person name="Benito M.-I."/>
            <person name="Town C.D."/>
            <person name="Fujii C.Y."/>
            <person name="Mason T.M."/>
            <person name="Bowman C.L."/>
            <person name="Barnstead M.E."/>
            <person name="Feldblyum T.V."/>
            <person name="Buell C.R."/>
            <person name="Ketchum K.A."/>
            <person name="Lee J.J."/>
            <person name="Ronning C.M."/>
            <person name="Koo H.L."/>
            <person name="Moffat K.S."/>
            <person name="Cronin L.A."/>
            <person name="Shen M."/>
            <person name="Pai G."/>
            <person name="Van Aken S."/>
            <person name="Umayam L."/>
            <person name="Tallon L.J."/>
            <person name="Gill J.E."/>
            <person name="Adams M.D."/>
            <person name="Carrera A.J."/>
            <person name="Creasy T.H."/>
            <person name="Goodman H.M."/>
            <person name="Somerville C.R."/>
            <person name="Copenhaver G.P."/>
            <person name="Preuss D."/>
            <person name="Nierman W.C."/>
            <person name="White O."/>
            <person name="Eisen J.A."/>
            <person name="Salzberg S.L."/>
            <person name="Fraser C.M."/>
            <person name="Venter J.C."/>
        </authorList>
    </citation>
    <scope>NUCLEOTIDE SEQUENCE [LARGE SCALE GENOMIC DNA]</scope>
    <source>
        <strain>cv. Columbia</strain>
    </source>
</reference>
<reference key="2">
    <citation type="journal article" date="2017" name="Plant J.">
        <title>Araport11: a complete reannotation of the Arabidopsis thaliana reference genome.</title>
        <authorList>
            <person name="Cheng C.Y."/>
            <person name="Krishnakumar V."/>
            <person name="Chan A.P."/>
            <person name="Thibaud-Nissen F."/>
            <person name="Schobel S."/>
            <person name="Town C.D."/>
        </authorList>
    </citation>
    <scope>GENOME REANNOTATION</scope>
    <source>
        <strain>cv. Columbia</strain>
    </source>
</reference>
<reference key="3">
    <citation type="submission" date="2006-02" db="EMBL/GenBank/DDBJ databases">
        <title>Arabidopsis ORF clones.</title>
        <authorList>
            <person name="Shinn P."/>
            <person name="Chen H."/>
            <person name="Kim C.J."/>
            <person name="Ecker J.R."/>
        </authorList>
    </citation>
    <scope>NUCLEOTIDE SEQUENCE [LARGE SCALE MRNA]</scope>
    <source>
        <strain>cv. Columbia</strain>
    </source>
</reference>
<reference key="4">
    <citation type="submission" date="2002-03" db="EMBL/GenBank/DDBJ databases">
        <title>Full-length cDNA from Arabidopsis thaliana.</title>
        <authorList>
            <person name="Brover V.V."/>
            <person name="Troukhan M.E."/>
            <person name="Alexandrov N.A."/>
            <person name="Lu Y.-P."/>
            <person name="Flavell R.B."/>
            <person name="Feldmann K.A."/>
        </authorList>
    </citation>
    <scope>NUCLEOTIDE SEQUENCE [LARGE SCALE MRNA]</scope>
</reference>
<reference key="5">
    <citation type="journal article" date="2013" name="J. Exp. Bot.">
        <title>The CEP family in land plants: evolutionary analyses, expression studies, and role in Arabidopsis shoot development.</title>
        <authorList>
            <person name="Roberts I."/>
            <person name="Smith S."/>
            <person name="De Rybel B."/>
            <person name="Van Den Broeke J."/>
            <person name="Smet W."/>
            <person name="De Cokere S."/>
            <person name="Mispelaere M."/>
            <person name="De Smet I."/>
            <person name="Beeckman T."/>
        </authorList>
    </citation>
    <scope>INDUCTION BY BRASSINOSTEROIDS; ABSCISIC ACID AND SALICYLIC ACID</scope>
    <scope>GENE FAMILY</scope>
    <source>
        <strain>cv. Columbia</strain>
    </source>
</reference>
<reference key="6">
    <citation type="journal article" date="2013" name="J. Exp. Bot.">
        <title>CEP genes regulate root and shoot development in response to environmental cues and are specific to seed plants.</title>
        <authorList>
            <person name="Delay C."/>
            <person name="Imin N."/>
            <person name="Djordjevic M.A."/>
        </authorList>
    </citation>
    <scope>GENE FAMILY</scope>
    <scope>NOMENCLATURE</scope>
    <source>
        <strain>cv. Columbia</strain>
    </source>
</reference>
<organism>
    <name type="scientific">Arabidopsis thaliana</name>
    <name type="common">Mouse-ear cress</name>
    <dbReference type="NCBI Taxonomy" id="3702"/>
    <lineage>
        <taxon>Eukaryota</taxon>
        <taxon>Viridiplantae</taxon>
        <taxon>Streptophyta</taxon>
        <taxon>Embryophyta</taxon>
        <taxon>Tracheophyta</taxon>
        <taxon>Spermatophyta</taxon>
        <taxon>Magnoliopsida</taxon>
        <taxon>eudicotyledons</taxon>
        <taxon>Gunneridae</taxon>
        <taxon>Pentapetalae</taxon>
        <taxon>rosids</taxon>
        <taxon>malvids</taxon>
        <taxon>Brassicales</taxon>
        <taxon>Brassicaceae</taxon>
        <taxon>Camelineae</taxon>
        <taxon>Arabidopsis</taxon>
    </lineage>
</organism>
<comment type="function">
    <text evidence="3">Extracellular signaling peptide that may regulate primary root growth rate and systemic nitrogen (N)-demand signaling.</text>
</comment>
<comment type="subunit">
    <text evidence="3">Interacts with CEP receptors (e.g. CEPR1 and CEPR2).</text>
</comment>
<comment type="subcellular location">
    <molecule>C-terminally encoded peptide 15</molecule>
    <subcellularLocation>
        <location evidence="1">Secreted</location>
        <location evidence="1">Extracellular space</location>
        <location evidence="1">Apoplast</location>
    </subcellularLocation>
    <text evidence="1">Accumulates in xylem sap.</text>
</comment>
<comment type="induction">
    <text evidence="6">Induced by brassinosteroids (BR) but repressed by abscisic acid (ABA) and salicylic acid (SA).</text>
</comment>
<comment type="PTM">
    <text evidence="3">The mature small signaling peptide is generated by proteolytic processing of the longer precursor.</text>
</comment>
<comment type="similarity">
    <text evidence="8">Belongs to the C-terminally encoded plant signaling peptide (CEP) family.</text>
</comment>
<comment type="sequence caution" evidence="8">
    <conflict type="erroneous initiation">
        <sequence resource="EMBL-CDS" id="AAM62632"/>
    </conflict>
    <text>Truncated N-terminus.</text>
</comment>
<keyword id="KW-0052">Apoplast</keyword>
<keyword id="KW-0217">Developmental protein</keyword>
<keyword id="KW-0372">Hormone</keyword>
<keyword id="KW-0379">Hydroxylation</keyword>
<keyword id="KW-1185">Reference proteome</keyword>
<keyword id="KW-0964">Secreted</keyword>
<keyword id="KW-0732">Signal</keyword>
<feature type="signal peptide" evidence="4">
    <location>
        <begin position="1"/>
        <end position="29"/>
    </location>
</feature>
<feature type="propeptide" id="PRO_0000440014" evidence="8">
    <location>
        <begin position="30"/>
        <end position="90"/>
    </location>
</feature>
<feature type="peptide" id="PRO_0000440015" description="C-terminally encoded peptide 15" evidence="2">
    <location>
        <begin position="91"/>
        <end position="105"/>
    </location>
</feature>
<feature type="region of interest" description="Disordered" evidence="5">
    <location>
        <begin position="68"/>
        <end position="105"/>
    </location>
</feature>
<feature type="compositionally biased region" description="Low complexity" evidence="5">
    <location>
        <begin position="68"/>
        <end position="80"/>
    </location>
</feature>
<feature type="modified residue" description="Hydroxyproline" evidence="2">
    <location>
        <position position="99"/>
    </location>
</feature>
<feature type="modified residue" description="Hydroxyproline" evidence="3">
    <location>
        <position position="101"/>
    </location>
</feature>
<feature type="sequence conflict" description="In Ref. 4; AAM62632." evidence="8" ref="4">
    <original>D</original>
    <variation>E</variation>
    <location>
        <position position="9"/>
    </location>
</feature>
<feature type="sequence conflict" description="In Ref. 4; AAM62632." evidence="8" ref="4">
    <original>V</original>
    <variation>M</variation>
    <location>
        <position position="32"/>
    </location>
</feature>
<name>PCP15_ARATH</name>
<evidence type="ECO:0000250" key="1">
    <source>
        <dbReference type="UniProtKB" id="O80460"/>
    </source>
</evidence>
<evidence type="ECO:0000250" key="2">
    <source>
        <dbReference type="UniProtKB" id="Q058G9"/>
    </source>
</evidence>
<evidence type="ECO:0000250" key="3">
    <source>
        <dbReference type="UniProtKB" id="Q8L8Y3"/>
    </source>
</evidence>
<evidence type="ECO:0000255" key="4"/>
<evidence type="ECO:0000256" key="5">
    <source>
        <dbReference type="SAM" id="MobiDB-lite"/>
    </source>
</evidence>
<evidence type="ECO:0000269" key="6">
    <source>
    </source>
</evidence>
<evidence type="ECO:0000303" key="7">
    <source>
    </source>
</evidence>
<evidence type="ECO:0000305" key="8"/>
<evidence type="ECO:0000312" key="9">
    <source>
        <dbReference type="Araport" id="AT2G40530"/>
    </source>
</evidence>
<evidence type="ECO:0000312" key="10">
    <source>
        <dbReference type="EMBL" id="AAB87584.1"/>
    </source>
</evidence>
<sequence>MDATKIKFDVILLSFLLIISGIPSNLGLSTSVRGTTRSEPEAFHGGKFPAMKMRKLMAPNMEVDYSSDYYDGGSSSSTTSPSPPVPDYDDIYRRQGDVPSPGIGH</sequence>
<accession>O22882</accession>
<accession>Q8LEI2</accession>
<proteinExistence type="evidence at transcript level"/>
<dbReference type="EMBL" id="AC002336">
    <property type="protein sequence ID" value="AAB87584.1"/>
    <property type="molecule type" value="Genomic_DNA"/>
</dbReference>
<dbReference type="EMBL" id="CP002685">
    <property type="protein sequence ID" value="AEC09844.1"/>
    <property type="molecule type" value="Genomic_DNA"/>
</dbReference>
<dbReference type="EMBL" id="BT024670">
    <property type="protein sequence ID" value="ABD57495.1"/>
    <property type="molecule type" value="mRNA"/>
</dbReference>
<dbReference type="EMBL" id="AY085405">
    <property type="protein sequence ID" value="AAM62632.1"/>
    <property type="status" value="ALT_INIT"/>
    <property type="molecule type" value="mRNA"/>
</dbReference>
<dbReference type="PIR" id="F84830">
    <property type="entry name" value="F84830"/>
</dbReference>
<dbReference type="RefSeq" id="NP_565935.1">
    <property type="nucleotide sequence ID" value="NM_129615.4"/>
</dbReference>
<dbReference type="SMR" id="O22882"/>
<dbReference type="STRING" id="3702.O22882"/>
<dbReference type="PaxDb" id="3702-AT2G40530.1"/>
<dbReference type="EnsemblPlants" id="AT2G40530.1">
    <property type="protein sequence ID" value="AT2G40530.1"/>
    <property type="gene ID" value="AT2G40530"/>
</dbReference>
<dbReference type="GeneID" id="818648"/>
<dbReference type="Gramene" id="AT2G40530.1">
    <property type="protein sequence ID" value="AT2G40530.1"/>
    <property type="gene ID" value="AT2G40530"/>
</dbReference>
<dbReference type="KEGG" id="ath:AT2G40530"/>
<dbReference type="Araport" id="AT2G40530"/>
<dbReference type="TAIR" id="AT2G40530"/>
<dbReference type="eggNOG" id="ENOG502R1PC">
    <property type="taxonomic scope" value="Eukaryota"/>
</dbReference>
<dbReference type="HOGENOM" id="CLU_2281408_0_0_1"/>
<dbReference type="InParanoid" id="O22882"/>
<dbReference type="OMA" id="ESEAFQG"/>
<dbReference type="PRO" id="PR:O22882"/>
<dbReference type="Proteomes" id="UP000006548">
    <property type="component" value="Chromosome 2"/>
</dbReference>
<dbReference type="ExpressionAtlas" id="O22882">
    <property type="expression patterns" value="baseline and differential"/>
</dbReference>
<dbReference type="GO" id="GO:0048046">
    <property type="term" value="C:apoplast"/>
    <property type="evidence" value="ECO:0000250"/>
    <property type="project" value="UniProtKB"/>
</dbReference>
<dbReference type="GO" id="GO:0005179">
    <property type="term" value="F:hormone activity"/>
    <property type="evidence" value="ECO:0000250"/>
    <property type="project" value="UniProtKB"/>
</dbReference>
<dbReference type="GO" id="GO:1902025">
    <property type="term" value="P:nitrate import"/>
    <property type="evidence" value="ECO:0000250"/>
    <property type="project" value="UniProtKB"/>
</dbReference>
<dbReference type="GO" id="GO:2000280">
    <property type="term" value="P:regulation of root development"/>
    <property type="evidence" value="ECO:0000250"/>
    <property type="project" value="UniProtKB"/>
</dbReference>
<dbReference type="GO" id="GO:0009737">
    <property type="term" value="P:response to abscisic acid"/>
    <property type="evidence" value="ECO:0000270"/>
    <property type="project" value="UniProtKB"/>
</dbReference>
<dbReference type="GO" id="GO:0009741">
    <property type="term" value="P:response to brassinosteroid"/>
    <property type="evidence" value="ECO:0000270"/>
    <property type="project" value="UniProtKB"/>
</dbReference>
<dbReference type="GO" id="GO:0009751">
    <property type="term" value="P:response to salicylic acid"/>
    <property type="evidence" value="ECO:0000270"/>
    <property type="project" value="UniProtKB"/>
</dbReference>